<evidence type="ECO:0000255" key="1">
    <source>
        <dbReference type="HAMAP-Rule" id="MF_04068"/>
    </source>
</evidence>
<keyword id="KW-0025">Alternative splicing</keyword>
<keyword id="KW-1048">Host nucleus</keyword>
<keyword id="KW-0472">Membrane</keyword>
<keyword id="KW-0694">RNA-binding</keyword>
<keyword id="KW-0468">Viral matrix protein</keyword>
<keyword id="KW-0946">Virion</keyword>
<sequence length="252" mass="27780">MSLLTEVETYVLSIVPSGPLKAEIAQRLEDVFAGKNTDLEALMEWLKTRPILSPLTKGILGFVFTLTVPSERGLQRRRFVQNALNGNGDPNNMDRAVKLYRKLKREITFHGAKEVALSYSAGALASCMGLIYNRMGAVTTEVAFAVVCATCEQIADSQHRSHRQMVTTTNPLIRHENRMVLASTTAKAMEQMAGSSEQAAEAMEVASQARQMVQAMRAIGTPPSSSAGLKDDLLENLQAYQKRMGVQMQRFK</sequence>
<proteinExistence type="inferred from homology"/>
<name>M1_I68A5</name>
<gene>
    <name evidence="1" type="primary">M</name>
</gene>
<protein>
    <recommendedName>
        <fullName evidence="1">Matrix protein 1</fullName>
        <shortName evidence="1">M1</shortName>
    </recommendedName>
</protein>
<organismHost>
    <name type="scientific">Aves</name>
    <dbReference type="NCBI Taxonomy" id="8782"/>
</organismHost>
<organismHost>
    <name type="scientific">Homo sapiens</name>
    <name type="common">Human</name>
    <dbReference type="NCBI Taxonomy" id="9606"/>
</organismHost>
<feature type="chain" id="PRO_0000326288" description="Matrix protein 1">
    <location>
        <begin position="1"/>
        <end position="252"/>
    </location>
</feature>
<feature type="region of interest" description="Membrane-binding" evidence="1">
    <location>
        <begin position="1"/>
        <end position="164"/>
    </location>
</feature>
<feature type="region of interest" description="RNP-binding" evidence="1">
    <location>
        <begin position="165"/>
        <end position="252"/>
    </location>
</feature>
<feature type="short sequence motif" description="Nuclear localization signal" evidence="1">
    <location>
        <begin position="101"/>
        <end position="105"/>
    </location>
</feature>
<accession>Q67180</accession>
<reference key="1">
    <citation type="journal article" date="1991" name="J. Virol.">
        <title>Evolutionary analysis of the influenza A virus M gene with comparison of the M1 and M2 proteins.</title>
        <authorList>
            <person name="Ito T."/>
            <person name="Gorman O.T."/>
            <person name="Kawaoka Y."/>
            <person name="Bean W.J."/>
            <person name="Webster R.G."/>
        </authorList>
    </citation>
    <scope>NUCLEOTIDE SEQUENCE [GENOMIC RNA]</scope>
</reference>
<dbReference type="EMBL" id="M63531">
    <property type="protein sequence ID" value="AAA43302.1"/>
    <property type="molecule type" value="Genomic_RNA"/>
</dbReference>
<dbReference type="RefSeq" id="YP_308854.1">
    <molecule id="Q67180-1"/>
    <property type="nucleotide sequence ID" value="NC_007377.1"/>
</dbReference>
<dbReference type="SMR" id="Q67180"/>
<dbReference type="KEGG" id="vg:3655108"/>
<dbReference type="OrthoDB" id="6929at10239"/>
<dbReference type="Proteomes" id="UP000200640">
    <property type="component" value="Genome"/>
</dbReference>
<dbReference type="GO" id="GO:0042025">
    <property type="term" value="C:host cell nucleus"/>
    <property type="evidence" value="ECO:0007669"/>
    <property type="project" value="UniProtKB-SubCell"/>
</dbReference>
<dbReference type="GO" id="GO:0016020">
    <property type="term" value="C:membrane"/>
    <property type="evidence" value="ECO:0007669"/>
    <property type="project" value="UniProtKB-KW"/>
</dbReference>
<dbReference type="GO" id="GO:0055036">
    <property type="term" value="C:virion membrane"/>
    <property type="evidence" value="ECO:0007669"/>
    <property type="project" value="UniProtKB-SubCell"/>
</dbReference>
<dbReference type="GO" id="GO:0003723">
    <property type="term" value="F:RNA binding"/>
    <property type="evidence" value="ECO:0007669"/>
    <property type="project" value="UniProtKB-UniRule"/>
</dbReference>
<dbReference type="GO" id="GO:0039660">
    <property type="term" value="F:structural constituent of virion"/>
    <property type="evidence" value="ECO:0007669"/>
    <property type="project" value="UniProtKB-UniRule"/>
</dbReference>
<dbReference type="GO" id="GO:0046761">
    <property type="term" value="P:viral budding from plasma membrane"/>
    <property type="evidence" value="ECO:0007669"/>
    <property type="project" value="UniProtKB-UniRule"/>
</dbReference>
<dbReference type="FunFam" id="1.10.10.180:FF:000001">
    <property type="entry name" value="Matrix protein 1"/>
    <property type="match status" value="1"/>
</dbReference>
<dbReference type="FunFam" id="1.20.91.10:FF:000001">
    <property type="entry name" value="Matrix protein 1"/>
    <property type="match status" value="1"/>
</dbReference>
<dbReference type="Gene3D" id="1.10.10.180">
    <property type="match status" value="1"/>
</dbReference>
<dbReference type="Gene3D" id="1.20.91.10">
    <property type="match status" value="1"/>
</dbReference>
<dbReference type="HAMAP" id="MF_04068">
    <property type="entry name" value="INFV_M1"/>
    <property type="match status" value="1"/>
</dbReference>
<dbReference type="InterPro" id="IPR036039">
    <property type="entry name" value="Flu_matrix_M1"/>
</dbReference>
<dbReference type="InterPro" id="IPR013188">
    <property type="entry name" value="Flu_matrix_M1_C"/>
</dbReference>
<dbReference type="InterPro" id="IPR001561">
    <property type="entry name" value="Flu_matrix_M1_N"/>
</dbReference>
<dbReference type="InterPro" id="IPR015423">
    <property type="entry name" value="Flu_matrix_M1_N_sub1"/>
</dbReference>
<dbReference type="InterPro" id="IPR015799">
    <property type="entry name" value="Flu_matrix_M1_N_sub2"/>
</dbReference>
<dbReference type="InterPro" id="IPR037533">
    <property type="entry name" value="INFV_M1"/>
</dbReference>
<dbReference type="Pfam" id="PF00598">
    <property type="entry name" value="Flu_M1"/>
    <property type="match status" value="1"/>
</dbReference>
<dbReference type="Pfam" id="PF08289">
    <property type="entry name" value="Flu_M1_C"/>
    <property type="match status" value="1"/>
</dbReference>
<dbReference type="SMART" id="SM00759">
    <property type="entry name" value="Flu_M1_C"/>
    <property type="match status" value="1"/>
</dbReference>
<dbReference type="SUPFAM" id="SSF48145">
    <property type="entry name" value="Influenza virus matrix protein M1"/>
    <property type="match status" value="1"/>
</dbReference>
<organism>
    <name type="scientific">Influenza A virus (strain A/Korea/426/1968 H2N2)</name>
    <dbReference type="NCBI Taxonomy" id="488241"/>
    <lineage>
        <taxon>Viruses</taxon>
        <taxon>Riboviria</taxon>
        <taxon>Orthornavirae</taxon>
        <taxon>Negarnaviricota</taxon>
        <taxon>Polyploviricotina</taxon>
        <taxon>Insthoviricetes</taxon>
        <taxon>Articulavirales</taxon>
        <taxon>Orthomyxoviridae</taxon>
        <taxon>Alphainfluenzavirus</taxon>
        <taxon>Alphainfluenzavirus influenzae</taxon>
        <taxon>Influenza A virus</taxon>
    </lineage>
</organism>
<comment type="function">
    <text evidence="1">Plays critical roles in virus replication, from virus entry and uncoating to assembly and budding of the virus particle. M1 binding to ribonucleocapsids (RNPs) in nucleus seems to inhibit viral transcription. Interaction of viral NEP with M1-RNP is thought to promote nuclear export of the complex, which is targeted to the virion assembly site at the apical plasma membrane in polarized epithelial cells. Interactions with NA and HA may bring M1, a non-raft-associated protein, into lipid rafts. Forms a continuous shell on the inner side of the lipid bilayer in virion, where it binds the RNP. During virus entry into cell, the M2 ion channel acidifies the internal virion core, inducing M1 dissociation from the RNP. M1-free RNPs are transported to the nucleus, where viral transcription and replication can take place.</text>
</comment>
<comment type="function">
    <text evidence="1">Determines the virion's shape: spherical or filamentous. Clinical isolates of influenza are characterized by the presence of significant proportion of filamentous virions, whereas after multiple passage on eggs or cell culture, virions have only spherical morphology. Filamentous virions are thought to be important to infect neighboring cells, and spherical virions more suited to spread through aerosol between hosts organisms.</text>
</comment>
<comment type="subunit">
    <text evidence="1">Homodimer and homomultimer. Interacts with NEP. Binds ribonucleocapsid by both interacting with genomic RNA and NP protein. May interact with HA and NA. Cannot bind NP without genomic RNA.</text>
</comment>
<comment type="subcellular location">
    <subcellularLocation>
        <location evidence="1">Virion membrane</location>
        <topology evidence="1">Peripheral membrane protein</topology>
        <orientation evidence="1">Cytoplasmic side</orientation>
    </subcellularLocation>
    <subcellularLocation>
        <location evidence="1">Host nucleus</location>
    </subcellularLocation>
</comment>
<comment type="alternative products">
    <event type="alternative splicing"/>
    <isoform>
        <id>Q67180-1</id>
        <name>M1</name>
        <sequence type="displayed"/>
    </isoform>
    <isoform>
        <id>Q67179-1</id>
        <name>M2</name>
        <sequence type="external"/>
    </isoform>
    <text>Only the first 9 residues are shared by the 2 isoforms.</text>
</comment>
<comment type="miscellaneous">
    <text evidence="1">Most abundant protein in virion. When expressed alone can form virus-like particles in transfected cells.</text>
</comment>
<comment type="similarity">
    <text evidence="1">Belongs to the influenza viruses Matrix protein M1 family.</text>
</comment>